<comment type="subunit">
    <text evidence="1">Homotrimer.</text>
</comment>
<comment type="interaction">
    <interactant intactId="EBI-373279">
        <id>Q86Y22</id>
    </interactant>
    <interactant intactId="EBI-371922">
        <id>Q96B26</id>
        <label>EXOSC8</label>
    </interactant>
    <organismsDiffer>false</organismsDiffer>
    <experiments>3</experiments>
</comment>
<comment type="subcellular location">
    <subcellularLocation>
        <location evidence="1">Cell membrane</location>
        <topology evidence="1">Single-pass type II membrane protein</topology>
        <orientation evidence="1">Extracellular side</orientation>
    </subcellularLocation>
</comment>
<comment type="alternative products">
    <event type="alternative splicing"/>
    <isoform>
        <id>Q86Y22-1</id>
        <name>1</name>
        <sequence type="displayed"/>
    </isoform>
    <isoform>
        <id>Q86Y22-2</id>
        <name>2</name>
        <sequence type="described" ref="VSP_019627 VSP_019628 VSP_019629 VSP_019630 VSP_019631"/>
    </isoform>
</comment>
<comment type="PTM">
    <text evidence="1">Undergoes proteolytic cleavage by furin protease to yield a 60 kDa soluble form that forms a homotrimer and exhibits a low affinity interaction with heparin.</text>
</comment>
<name>CONA1_HUMAN</name>
<feature type="chain" id="PRO_0000245226" description="Collagen alpha-1(XXIII) chain">
    <location>
        <begin position="1"/>
        <end position="540"/>
    </location>
</feature>
<feature type="topological domain" description="Cytoplasmic" evidence="2">
    <location>
        <begin position="1"/>
        <end position="34"/>
    </location>
</feature>
<feature type="transmembrane region" description="Helical; Signal-anchor for type II membrane protein" evidence="2">
    <location>
        <begin position="35"/>
        <end position="56"/>
    </location>
</feature>
<feature type="topological domain" description="Extracellular" evidence="2">
    <location>
        <begin position="57"/>
        <end position="540"/>
    </location>
</feature>
<feature type="domain" description="Collagen-like 1">
    <location>
        <begin position="124"/>
        <end position="243"/>
    </location>
</feature>
<feature type="domain" description="Collagen-like 2">
    <location>
        <begin position="251"/>
        <end position="305"/>
    </location>
</feature>
<feature type="domain" description="Collagen-like 3">
    <location>
        <begin position="321"/>
        <end position="380"/>
    </location>
</feature>
<feature type="domain" description="Collagen-like 4">
    <location>
        <begin position="412"/>
        <end position="460"/>
    </location>
</feature>
<feature type="domain" description="Collagen-like 5">
    <location>
        <begin position="463"/>
        <end position="522"/>
    </location>
</feature>
<feature type="region of interest" description="Disordered" evidence="3">
    <location>
        <begin position="1"/>
        <end position="28"/>
    </location>
</feature>
<feature type="region of interest" description="Disordered" evidence="3">
    <location>
        <begin position="109"/>
        <end position="304"/>
    </location>
</feature>
<feature type="region of interest" description="Disordered" evidence="3">
    <location>
        <begin position="316"/>
        <end position="540"/>
    </location>
</feature>
<feature type="compositionally biased region" description="Gly residues" evidence="3">
    <location>
        <begin position="1"/>
        <end position="26"/>
    </location>
</feature>
<feature type="compositionally biased region" description="Low complexity" evidence="3">
    <location>
        <begin position="140"/>
        <end position="156"/>
    </location>
</feature>
<feature type="compositionally biased region" description="Low complexity" evidence="3">
    <location>
        <begin position="168"/>
        <end position="183"/>
    </location>
</feature>
<feature type="compositionally biased region" description="Pro residues" evidence="3">
    <location>
        <begin position="185"/>
        <end position="195"/>
    </location>
</feature>
<feature type="compositionally biased region" description="Pro residues" evidence="3">
    <location>
        <begin position="322"/>
        <end position="334"/>
    </location>
</feature>
<feature type="compositionally biased region" description="Basic and acidic residues" evidence="3">
    <location>
        <begin position="350"/>
        <end position="362"/>
    </location>
</feature>
<feature type="compositionally biased region" description="Pro residues" evidence="3">
    <location>
        <begin position="411"/>
        <end position="422"/>
    </location>
</feature>
<feature type="compositionally biased region" description="Basic and acidic residues" evidence="3">
    <location>
        <begin position="435"/>
        <end position="444"/>
    </location>
</feature>
<feature type="compositionally biased region" description="Basic and acidic residues" evidence="3">
    <location>
        <begin position="486"/>
        <end position="503"/>
    </location>
</feature>
<feature type="splice variant" id="VSP_019627" description="In isoform 2." evidence="4">
    <location>
        <begin position="1"/>
        <end position="27"/>
    </location>
</feature>
<feature type="splice variant" id="VSP_019628" description="In isoform 2." evidence="4">
    <original>ATTAGSRAVSALCLLLSVGSAAACLLLGVQAAALQGRVAALEEERELLRRAGPPGALDAWAEPHLERLLRE</original>
    <variation>MESRSGIQAGVRCRDLGSLQPPPLALKQFSSLSLPSSWDYRRLPPRCGFLFEVSETTNPPAGTNSRHTLTV</variation>
    <location>
        <begin position="28"/>
        <end position="98"/>
    </location>
</feature>
<feature type="splice variant" id="VSP_019629" description="In isoform 2." evidence="4">
    <location>
        <begin position="140"/>
        <end position="148"/>
    </location>
</feature>
<feature type="splice variant" id="VSP_019630" description="In isoform 2." evidence="4">
    <original>APGLKGEQGDTVVIDYDGRILDALKGPPGPQGPPGPPGIPGAKGELGLPG</original>
    <variation>DVRDPGLGSVSSCSQRLASSSKKNGSEPPPGCAGCPRPQGRAGRHSGDRL</variation>
    <location>
        <begin position="296"/>
        <end position="345"/>
    </location>
</feature>
<feature type="splice variant" id="VSP_019631" description="In isoform 2." evidence="4">
    <location>
        <begin position="346"/>
        <end position="540"/>
    </location>
</feature>
<feature type="sequence variant" id="VAR_026964" description="In dbSNP:rs890802.">
    <original>T</original>
    <variation>A</variation>
    <location>
        <position position="287"/>
    </location>
</feature>
<keyword id="KW-0025">Alternative splicing</keyword>
<keyword id="KW-1003">Cell membrane</keyword>
<keyword id="KW-0176">Collagen</keyword>
<keyword id="KW-0472">Membrane</keyword>
<keyword id="KW-1267">Proteomics identification</keyword>
<keyword id="KW-1185">Reference proteome</keyword>
<keyword id="KW-0677">Repeat</keyword>
<keyword id="KW-0735">Signal-anchor</keyword>
<keyword id="KW-0812">Transmembrane</keyword>
<keyword id="KW-1133">Transmembrane helix</keyword>
<protein>
    <recommendedName>
        <fullName>Collagen alpha-1(XXIII) chain</fullName>
    </recommendedName>
</protein>
<reference key="1">
    <citation type="journal article" date="2003" name="J. Biol. Chem.">
        <title>Type XXIII collagen, a new transmembrane collagen identified in metastatic tumor cells.</title>
        <authorList>
            <person name="Banyard J."/>
            <person name="Bao L."/>
            <person name="Zetter B.R."/>
        </authorList>
    </citation>
    <scope>NUCLEOTIDE SEQUENCE [MRNA] (ISOFORM 1)</scope>
</reference>
<reference key="2">
    <citation type="submission" date="2005-01" db="EMBL/GenBank/DDBJ databases">
        <authorList>
            <person name="Koch M."/>
            <person name="Burgeson R.E."/>
            <person name="Gordon M.K."/>
        </authorList>
    </citation>
    <scope>NUCLEOTIDE SEQUENCE [MRNA] (ISOFORM 1)</scope>
    <source>
        <tissue>Placenta</tissue>
    </source>
</reference>
<reference key="3">
    <citation type="journal article" date="2004" name="Genome Res.">
        <title>The status, quality, and expansion of the NIH full-length cDNA project: the Mammalian Gene Collection (MGC).</title>
        <authorList>
            <consortium name="The MGC Project Team"/>
        </authorList>
    </citation>
    <scope>NUCLEOTIDE SEQUENCE [LARGE SCALE MRNA] (ISOFORM 2)</scope>
    <source>
        <tissue>Brain</tissue>
    </source>
</reference>
<reference key="4">
    <citation type="journal article" date="2007" name="BMC Genomics">
        <title>The full-ORF clone resource of the German cDNA consortium.</title>
        <authorList>
            <person name="Bechtel S."/>
            <person name="Rosenfelder H."/>
            <person name="Duda A."/>
            <person name="Schmidt C.P."/>
            <person name="Ernst U."/>
            <person name="Wellenreuther R."/>
            <person name="Mehrle A."/>
            <person name="Schuster C."/>
            <person name="Bahr A."/>
            <person name="Bloecker H."/>
            <person name="Heubner D."/>
            <person name="Hoerlein A."/>
            <person name="Michel G."/>
            <person name="Wedler H."/>
            <person name="Koehrer K."/>
            <person name="Ottenwaelder B."/>
            <person name="Poustka A."/>
            <person name="Wiemann S."/>
            <person name="Schupp I."/>
        </authorList>
    </citation>
    <scope>NUCLEOTIDE SEQUENCE [LARGE SCALE MRNA] OF 340-540</scope>
    <source>
        <tissue>Testis</tissue>
    </source>
</reference>
<accession>Q86Y22</accession>
<accession>Q8IVR4</accession>
<accession>Q9NT93</accession>
<organism>
    <name type="scientific">Homo sapiens</name>
    <name type="common">Human</name>
    <dbReference type="NCBI Taxonomy" id="9606"/>
    <lineage>
        <taxon>Eukaryota</taxon>
        <taxon>Metazoa</taxon>
        <taxon>Chordata</taxon>
        <taxon>Craniata</taxon>
        <taxon>Vertebrata</taxon>
        <taxon>Euteleostomi</taxon>
        <taxon>Mammalia</taxon>
        <taxon>Eutheria</taxon>
        <taxon>Euarchontoglires</taxon>
        <taxon>Primates</taxon>
        <taxon>Haplorrhini</taxon>
        <taxon>Catarrhini</taxon>
        <taxon>Hominidae</taxon>
        <taxon>Homo</taxon>
    </lineage>
</organism>
<dbReference type="EMBL" id="AY158895">
    <property type="protein sequence ID" value="AAO18361.1"/>
    <property type="molecule type" value="mRNA"/>
</dbReference>
<dbReference type="EMBL" id="AY898961">
    <property type="protein sequence ID" value="AAX84028.1"/>
    <property type="molecule type" value="mRNA"/>
</dbReference>
<dbReference type="EMBL" id="BC042428">
    <property type="protein sequence ID" value="AAH42428.1"/>
    <property type="molecule type" value="mRNA"/>
</dbReference>
<dbReference type="EMBL" id="AL137461">
    <property type="protein sequence ID" value="CAB70749.1"/>
    <property type="molecule type" value="mRNA"/>
</dbReference>
<dbReference type="CCDS" id="CCDS4436.1">
    <molecule id="Q86Y22-1"/>
</dbReference>
<dbReference type="PIR" id="T46404">
    <property type="entry name" value="T46404"/>
</dbReference>
<dbReference type="RefSeq" id="NP_775736.2">
    <molecule id="Q86Y22-1"/>
    <property type="nucleotide sequence ID" value="NM_173465.3"/>
</dbReference>
<dbReference type="BioGRID" id="124839">
    <property type="interactions" value="14"/>
</dbReference>
<dbReference type="ComplexPortal" id="CPX-1764">
    <property type="entry name" value="Collagen type XXIII trimer"/>
</dbReference>
<dbReference type="FunCoup" id="Q86Y22">
    <property type="interactions" value="108"/>
</dbReference>
<dbReference type="IntAct" id="Q86Y22">
    <property type="interactions" value="12"/>
</dbReference>
<dbReference type="MINT" id="Q86Y22"/>
<dbReference type="STRING" id="9606.ENSP00000375069"/>
<dbReference type="GlyGen" id="Q86Y22">
    <property type="glycosylation" value="2 sites, 1 O-linked glycan (1 site)"/>
</dbReference>
<dbReference type="iPTMnet" id="Q86Y22"/>
<dbReference type="PhosphoSitePlus" id="Q86Y22"/>
<dbReference type="BioMuta" id="COL23A1"/>
<dbReference type="DMDM" id="74723551"/>
<dbReference type="jPOST" id="Q86Y22"/>
<dbReference type="MassIVE" id="Q86Y22"/>
<dbReference type="PaxDb" id="9606-ENSP00000375069"/>
<dbReference type="PeptideAtlas" id="Q86Y22"/>
<dbReference type="ProteomicsDB" id="70352">
    <molecule id="Q86Y22-1"/>
</dbReference>
<dbReference type="ProteomicsDB" id="70353">
    <molecule id="Q86Y22-2"/>
</dbReference>
<dbReference type="Antibodypedia" id="29441">
    <property type="antibodies" value="158 antibodies from 27 providers"/>
</dbReference>
<dbReference type="DNASU" id="91522"/>
<dbReference type="Ensembl" id="ENST00000390654.8">
    <molecule id="Q86Y22-1"/>
    <property type="protein sequence ID" value="ENSP00000375069.3"/>
    <property type="gene ID" value="ENSG00000050767.18"/>
</dbReference>
<dbReference type="GeneID" id="91522"/>
<dbReference type="KEGG" id="hsa:91522"/>
<dbReference type="MANE-Select" id="ENST00000390654.8">
    <property type="protein sequence ID" value="ENSP00000375069.3"/>
    <property type="RefSeq nucleotide sequence ID" value="NM_173465.4"/>
    <property type="RefSeq protein sequence ID" value="NP_775736.2"/>
</dbReference>
<dbReference type="UCSC" id="uc063kkp.1">
    <molecule id="Q86Y22-1"/>
    <property type="organism name" value="human"/>
</dbReference>
<dbReference type="AGR" id="HGNC:22990"/>
<dbReference type="CTD" id="91522"/>
<dbReference type="DisGeNET" id="91522"/>
<dbReference type="GeneCards" id="COL23A1"/>
<dbReference type="HGNC" id="HGNC:22990">
    <property type="gene designation" value="COL23A1"/>
</dbReference>
<dbReference type="HPA" id="ENSG00000050767">
    <property type="expression patterns" value="Group enriched (heart muscle, thyroid gland)"/>
</dbReference>
<dbReference type="MIM" id="610043">
    <property type="type" value="gene"/>
</dbReference>
<dbReference type="neXtProt" id="NX_Q86Y22"/>
<dbReference type="OpenTargets" id="ENSG00000050767"/>
<dbReference type="PharmGKB" id="PA134899251"/>
<dbReference type="VEuPathDB" id="HostDB:ENSG00000050767"/>
<dbReference type="eggNOG" id="KOG3544">
    <property type="taxonomic scope" value="Eukaryota"/>
</dbReference>
<dbReference type="GeneTree" id="ENSGT00940000162238"/>
<dbReference type="InParanoid" id="Q86Y22"/>
<dbReference type="OMA" id="ITAHSEF"/>
<dbReference type="OrthoDB" id="5983381at2759"/>
<dbReference type="PAN-GO" id="Q86Y22">
    <property type="GO annotations" value="4 GO annotations based on evolutionary models"/>
</dbReference>
<dbReference type="PhylomeDB" id="Q86Y22"/>
<dbReference type="TreeFam" id="TF338175"/>
<dbReference type="PathwayCommons" id="Q86Y22"/>
<dbReference type="Reactome" id="R-HSA-1442490">
    <property type="pathway name" value="Collagen degradation"/>
</dbReference>
<dbReference type="Reactome" id="R-HSA-1650814">
    <property type="pathway name" value="Collagen biosynthesis and modifying enzymes"/>
</dbReference>
<dbReference type="Reactome" id="R-HSA-216083">
    <property type="pathway name" value="Integrin cell surface interactions"/>
</dbReference>
<dbReference type="Reactome" id="R-HSA-8948216">
    <property type="pathway name" value="Collagen chain trimerization"/>
</dbReference>
<dbReference type="SignaLink" id="Q86Y22"/>
<dbReference type="BioGRID-ORCS" id="91522">
    <property type="hits" value="11 hits in 1146 CRISPR screens"/>
</dbReference>
<dbReference type="ChiTaRS" id="COL23A1">
    <property type="organism name" value="human"/>
</dbReference>
<dbReference type="GenomeRNAi" id="91522"/>
<dbReference type="Pharos" id="Q86Y22">
    <property type="development level" value="Tbio"/>
</dbReference>
<dbReference type="PRO" id="PR:Q86Y22"/>
<dbReference type="Proteomes" id="UP000005640">
    <property type="component" value="Chromosome 5"/>
</dbReference>
<dbReference type="RNAct" id="Q86Y22">
    <property type="molecule type" value="protein"/>
</dbReference>
<dbReference type="Bgee" id="ENSG00000050767">
    <property type="expression patterns" value="Expressed in right lobe of thyroid gland and 105 other cell types or tissues"/>
</dbReference>
<dbReference type="ExpressionAtlas" id="Q86Y22">
    <property type="expression patterns" value="baseline and differential"/>
</dbReference>
<dbReference type="GO" id="GO:0009986">
    <property type="term" value="C:cell surface"/>
    <property type="evidence" value="ECO:0007669"/>
    <property type="project" value="Ensembl"/>
</dbReference>
<dbReference type="GO" id="GO:0005581">
    <property type="term" value="C:collagen trimer"/>
    <property type="evidence" value="ECO:0007669"/>
    <property type="project" value="UniProtKB-KW"/>
</dbReference>
<dbReference type="GO" id="GO:0062023">
    <property type="term" value="C:collagen-containing extracellular matrix"/>
    <property type="evidence" value="ECO:0007005"/>
    <property type="project" value="BHF-UCL"/>
</dbReference>
<dbReference type="GO" id="GO:0005788">
    <property type="term" value="C:endoplasmic reticulum lumen"/>
    <property type="evidence" value="ECO:0000304"/>
    <property type="project" value="Reactome"/>
</dbReference>
<dbReference type="GO" id="GO:0005615">
    <property type="term" value="C:extracellular space"/>
    <property type="evidence" value="ECO:0000318"/>
    <property type="project" value="GO_Central"/>
</dbReference>
<dbReference type="GO" id="GO:0005886">
    <property type="term" value="C:plasma membrane"/>
    <property type="evidence" value="ECO:0000304"/>
    <property type="project" value="Reactome"/>
</dbReference>
<dbReference type="GO" id="GO:0030020">
    <property type="term" value="F:extracellular matrix structural constituent conferring tensile strength"/>
    <property type="evidence" value="ECO:0000318"/>
    <property type="project" value="GO_Central"/>
</dbReference>
<dbReference type="GO" id="GO:0008201">
    <property type="term" value="F:heparin binding"/>
    <property type="evidence" value="ECO:0007669"/>
    <property type="project" value="Ensembl"/>
</dbReference>
<dbReference type="GO" id="GO:0042802">
    <property type="term" value="F:identical protein binding"/>
    <property type="evidence" value="ECO:0007669"/>
    <property type="project" value="Ensembl"/>
</dbReference>
<dbReference type="InterPro" id="IPR008160">
    <property type="entry name" value="Collagen"/>
</dbReference>
<dbReference type="InterPro" id="IPR050938">
    <property type="entry name" value="Collagen_Structural_Proteins"/>
</dbReference>
<dbReference type="PANTHER" id="PTHR37456:SF4">
    <property type="entry name" value="COLLAGEN ALPHA-1(XXIII) CHAIN"/>
    <property type="match status" value="1"/>
</dbReference>
<dbReference type="PANTHER" id="PTHR37456">
    <property type="entry name" value="SI:CH211-266K2.1"/>
    <property type="match status" value="1"/>
</dbReference>
<dbReference type="Pfam" id="PF01391">
    <property type="entry name" value="Collagen"/>
    <property type="match status" value="8"/>
</dbReference>
<gene>
    <name type="primary">COL23A1</name>
</gene>
<proteinExistence type="evidence at protein level"/>
<sequence>MGPGERAGGGGDAGKGNAAGGGGGGRSATTAGSRAVSALCLLLSVGSAAACLLLGVQAAALQGRVAALEEERELLRRAGPPGALDAWAEPHLERLLREKLDGLAKIRTAREAPSECVCPPGPPGRRGKPGRRGDPGPPGQSGRDGYPGPLGLDGKPGLPGPKGEKGAPGDFGPRGDQGQDGAAGPPGPPGPPGARGPPGDTGKDGPRGAQGPAGPKGEPGQDGEMGPKGPPGPKGEPGVPGKKGDDGTPSQPGPPGPKGEPGSMGPRGENGVDGAPGPKGEPGHRGTDGAAGPRGAPGLKGEQGDTVVIDYDGRILDALKGPPGPQGPPGPPGIPGAKGELGLPGAPGIDGEKGPKGQKGDPGEPGPAGLKGEAGEMGLSGLPGADGLKGEKGESASDSLQESLAQLIVEPGPPGPPGPPGPMGLQGIQGPKGLDGAKGEKGASGERGPSGLPGPVGPPGLIGLPGTKGEKGRPGEPGLDGFPGPRGEKGDRSERGEKGERGVPGRKGVKGQKGEPGPPGLDQPCPVGPDGLPVPGCWHK</sequence>
<evidence type="ECO:0000250" key="1"/>
<evidence type="ECO:0000255" key="2"/>
<evidence type="ECO:0000256" key="3">
    <source>
        <dbReference type="SAM" id="MobiDB-lite"/>
    </source>
</evidence>
<evidence type="ECO:0000303" key="4">
    <source>
    </source>
</evidence>